<reference evidence="4" key="1">
    <citation type="journal article" date="2011" name="Biochimie">
        <title>Isolation, molecular cloning and antimicrobial activity of novel defensins from common chickweed (Stellaria media L.) seeds.</title>
        <authorList>
            <person name="Slavokhotova A.A."/>
            <person name="Odintsova T.I."/>
            <person name="Rogozhin E.A."/>
            <person name="Musolyamov A.K."/>
            <person name="Andreev Y.A."/>
            <person name="Grishin E.V."/>
            <person name="Egorov T.A."/>
        </authorList>
    </citation>
    <scope>NUCLEOTIDE SEQUENCE [GENOMIC DNA / MRNA]</scope>
    <scope>PROTEIN SEQUENCE OF 32-81</scope>
    <scope>FUNCTION</scope>
    <scope>MASS SPECTROMETRY</scope>
    <scope>IDENTIFICATION BY MASS SPECTROMETRY</scope>
    <source>
        <tissue evidence="3">Seed</tissue>
    </source>
</reference>
<protein>
    <recommendedName>
        <fullName evidence="5">Antimicrobial peptide D1</fullName>
        <shortName evidence="3">Sm-AMP-D1</shortName>
        <shortName evidence="3">Sm-D1</shortName>
    </recommendedName>
</protein>
<organism evidence="3">
    <name type="scientific">Stellaria media</name>
    <name type="common">Common chickweed</name>
    <name type="synonym">Alsine media</name>
    <dbReference type="NCBI Taxonomy" id="13274"/>
    <lineage>
        <taxon>Eukaryota</taxon>
        <taxon>Viridiplantae</taxon>
        <taxon>Streptophyta</taxon>
        <taxon>Embryophyta</taxon>
        <taxon>Tracheophyta</taxon>
        <taxon>Spermatophyta</taxon>
        <taxon>Magnoliopsida</taxon>
        <taxon>eudicotyledons</taxon>
        <taxon>Gunneridae</taxon>
        <taxon>Pentapetalae</taxon>
        <taxon>Caryophyllales</taxon>
        <taxon>Caryophyllaceae</taxon>
        <taxon>Alsineae</taxon>
        <taxon>Stellaria</taxon>
    </lineage>
</organism>
<dbReference type="SMR" id="C0HL82"/>
<dbReference type="GO" id="GO:0050832">
    <property type="term" value="P:defense response to fungus"/>
    <property type="evidence" value="ECO:0007669"/>
    <property type="project" value="UniProtKB-KW"/>
</dbReference>
<dbReference type="GO" id="GO:0031640">
    <property type="term" value="P:killing of cells of another organism"/>
    <property type="evidence" value="ECO:0007669"/>
    <property type="project" value="UniProtKB-KW"/>
</dbReference>
<dbReference type="Gene3D" id="3.30.30.10">
    <property type="entry name" value="Knottin, scorpion toxin-like"/>
    <property type="match status" value="1"/>
</dbReference>
<dbReference type="InterPro" id="IPR008176">
    <property type="entry name" value="Defensin_plant"/>
</dbReference>
<dbReference type="InterPro" id="IPR003614">
    <property type="entry name" value="Scorpion_toxin-like"/>
</dbReference>
<dbReference type="InterPro" id="IPR036574">
    <property type="entry name" value="Scorpion_toxin-like_sf"/>
</dbReference>
<dbReference type="PANTHER" id="PTHR33147">
    <property type="entry name" value="DEFENSIN-LIKE PROTEIN 1"/>
    <property type="match status" value="1"/>
</dbReference>
<dbReference type="PANTHER" id="PTHR33147:SF46">
    <property type="entry name" value="DEFENSIN-LIKE PROTEIN 19"/>
    <property type="match status" value="1"/>
</dbReference>
<dbReference type="Pfam" id="PF00304">
    <property type="entry name" value="Gamma-thionin"/>
    <property type="match status" value="1"/>
</dbReference>
<dbReference type="SMART" id="SM00505">
    <property type="entry name" value="Knot1"/>
    <property type="match status" value="1"/>
</dbReference>
<dbReference type="SUPFAM" id="SSF57095">
    <property type="entry name" value="Scorpion toxin-like"/>
    <property type="match status" value="1"/>
</dbReference>
<dbReference type="PROSITE" id="PS00940">
    <property type="entry name" value="GAMMA_THIONIN"/>
    <property type="match status" value="1"/>
</dbReference>
<feature type="signal peptide" evidence="2">
    <location>
        <begin position="1"/>
        <end position="31"/>
    </location>
</feature>
<feature type="peptide" id="PRO_0000443559" description="Antimicrobial peptide D1" evidence="2">
    <location>
        <begin position="32"/>
        <end position="81"/>
    </location>
</feature>
<feature type="disulfide bond" evidence="1">
    <location>
        <begin position="34"/>
        <end position="81"/>
    </location>
</feature>
<feature type="disulfide bond" evidence="1">
    <location>
        <begin position="45"/>
        <end position="66"/>
    </location>
</feature>
<feature type="disulfide bond" evidence="1">
    <location>
        <begin position="51"/>
        <end position="75"/>
    </location>
</feature>
<feature type="disulfide bond" evidence="1">
    <location>
        <begin position="55"/>
        <end position="77"/>
    </location>
</feature>
<keyword id="KW-0929">Antimicrobial</keyword>
<keyword id="KW-0903">Direct protein sequencing</keyword>
<keyword id="KW-1015">Disulfide bond</keyword>
<keyword id="KW-0295">Fungicide</keyword>
<keyword id="KW-0732">Signal</keyword>
<name>AMPD1_STEME</name>
<comment type="function">
    <text evidence="2">Antimicrobial peptide probably active against fungi like B.sorokiniana, F.oxysporum, F.graminearum, F.avenaceum, B.cinerea, P.beta, P.infestans and P.debaryanum.</text>
</comment>
<comment type="mass spectrometry"/>
<comment type="similarity">
    <text evidence="4">Belongs to the DEFL family.</text>
</comment>
<evidence type="ECO:0000250" key="1">
    <source>
        <dbReference type="UniProtKB" id="P69241"/>
    </source>
</evidence>
<evidence type="ECO:0000269" key="2">
    <source>
    </source>
</evidence>
<evidence type="ECO:0000303" key="3">
    <source>
    </source>
</evidence>
<evidence type="ECO:0000305" key="4"/>
<evidence type="ECO:0000305" key="5">
    <source>
    </source>
</evidence>
<proteinExistence type="evidence at protein level"/>
<accession>C0HL82</accession>
<sequence>MAKTVLGIHVTFLTLLFAVLLLNDVMYTPVEKICERASGTWKGICIHSNDCNNQCVKWENAGSGSCHYQFPNYMCFCYFDC</sequence>